<proteinExistence type="evidence at protein level"/>
<keyword id="KW-0002">3D-structure</keyword>
<keyword id="KW-0025">Alternative splicing</keyword>
<keyword id="KW-0225">Disease variant</keyword>
<keyword id="KW-1015">Disulfide bond</keyword>
<keyword id="KW-0256">Endoplasmic reticulum</keyword>
<keyword id="KW-0325">Glycoprotein</keyword>
<keyword id="KW-0945">Host-virus interaction</keyword>
<keyword id="KW-0991">Intellectual disability</keyword>
<keyword id="KW-0472">Membrane</keyword>
<keyword id="KW-0914">Notch signaling pathway</keyword>
<keyword id="KW-0597">Phosphoprotein</keyword>
<keyword id="KW-1267">Proteomics identification</keyword>
<keyword id="KW-1185">Reference proteome</keyword>
<keyword id="KW-0677">Repeat</keyword>
<keyword id="KW-0732">Signal</keyword>
<keyword id="KW-0812">Transmembrane</keyword>
<keyword id="KW-1133">Transmembrane helix</keyword>
<comment type="function">
    <text evidence="1 6 15 16 17">Plays a role in the endoplasmic reticulum quality control (ERQC) system also called ER-associated degradation (ERAD) involved in ubiquitin-dependent degradation of misfolded endoplasmic reticulum proteins (PubMed:16186509, PubMed:29997207, PubMed:37943610, PubMed:37943617). Enhances SYVN1 stability. Plays a role in LPL maturation and secretion. Required for normal differentiation of the pancreas epithelium, and for normal exocrine function and survival of pancreatic cells. May play a role in Notch signaling.</text>
</comment>
<comment type="subunit">
    <text evidence="1 6 7 8 10 11 12 13 14 16">Homodimer and homooligomer (By similarity). May form a complex with ERLEC1, HSPA5, OS9, and SYVN1 (PubMed:18264092, PubMed:18502753, PubMed:37943610, PubMed:37943617). Interacts with FOXRED2 and EDEM1 (PubMed:19524542, PubMed:19706418). Interacts with LPL (PubMed:25066055). Interacts with LMF1; may stabilize the complex formed by LPL and LMF1 and thereby promote the export of LPL dimers (By similarity). Component of the HRD1 complex, which comprises at least SYNV1/HRD1, DERL1/2, FAM8A1, HERPUD1/HERP, OS9, SEL1L and UBE2J1 (PubMed:16186509, PubMed:28827405). SYNV1 assembles with SEL1L and FAM8A1 through its transmembrane domains, but interaction with its cytoplasmic domain is required to confer stability to FAM8A1 and enhance recruitment of HERPUD1 (PubMed:28827405). The interaction with SYNV1/HRD1 is direct (PubMed:26471130).</text>
</comment>
<comment type="subunit">
    <text evidence="15">(Microbial infection) Interacts with human cytomegalovirus protein UL148.</text>
</comment>
<comment type="interaction">
    <interactant intactId="EBI-358766">
        <id>Q9UBV2</id>
    </interactant>
    <interactant intactId="EBI-297353">
        <id>P00533</id>
        <label>EGFR</label>
    </interactant>
    <organismsDiffer>false</organismsDiffer>
    <experiments>2</experiments>
</comment>
<comment type="interaction">
    <interactant intactId="EBI-358766">
        <id>Q9UBV2</id>
    </interactant>
    <interactant intactId="EBI-15600828">
        <id>O75460-1</id>
        <label>ERN1</label>
    </interactant>
    <organismsDiffer>false</organismsDiffer>
    <experiments>2</experiments>
</comment>
<comment type="interaction">
    <interactant intactId="EBI-358766">
        <id>Q9UBV2</id>
    </interactant>
    <interactant intactId="EBI-10763361">
        <id>Q8IWF2</id>
        <label>FOXRED2</label>
    </interactant>
    <organismsDiffer>false</organismsDiffer>
    <experiments>7</experiments>
</comment>
<comment type="interaction">
    <interactant intactId="EBI-358766">
        <id>Q9UBV2</id>
    </interactant>
    <interactant intactId="EBI-3936704">
        <id>Q16288</id>
        <label>NTRK3</label>
    </interactant>
    <organismsDiffer>false</organismsDiffer>
    <experiments>2</experiments>
</comment>
<comment type="interaction">
    <interactant intactId="EBI-358766">
        <id>Q9UBV2</id>
    </interactant>
    <interactant intactId="EBI-725454">
        <id>Q13438</id>
        <label>OS9</label>
    </interactant>
    <organismsDiffer>false</organismsDiffer>
    <experiments>14</experiments>
</comment>
<comment type="interaction">
    <interactant intactId="EBI-358766">
        <id>Q9UBV2</id>
    </interactant>
    <interactant intactId="EBI-947849">
        <id>Q86TM6</id>
        <label>SYVN1</label>
    </interactant>
    <organismsDiffer>false</organismsDiffer>
    <experiments>21</experiments>
</comment>
<comment type="subcellular location">
    <subcellularLocation>
        <location evidence="6">Endoplasmic reticulum membrane</location>
        <topology evidence="6">Single-pass type I membrane protein</topology>
    </subcellularLocation>
</comment>
<comment type="alternative products">
    <event type="alternative splicing"/>
    <isoform>
        <id>Q9UBV2-1</id>
        <name>1</name>
        <sequence type="displayed"/>
    </isoform>
    <isoform>
        <id>Q9UBV2-2</id>
        <name>2</name>
        <sequence type="described" ref="VSP_013322 VSP_013323"/>
    </isoform>
</comment>
<comment type="tissue specificity">
    <text>Highly expressed in pancreas.</text>
</comment>
<comment type="PTM">
    <text evidence="5 8 9">N-glycosylated.</text>
</comment>
<comment type="disease" evidence="16">
    <disease id="DI-06993">
        <name>Neurodevelopmental disorder with poor growth, absent speech, progressive ataxia, and dysmorphic facies</name>
        <acronym>NEDGSAF</acronym>
        <description>A severe, autosomal recessive disorder with onset in infancy and characterized by developmental delay, absent speech, intellectual disability, short stature, microcephaly, facial dysmorphism, hypotonia, and/or ataxia.</description>
        <dbReference type="MIM" id="621067"/>
    </disease>
    <text>The disease is caused by variants affecting the gene represented in this entry.</text>
</comment>
<comment type="disease" evidence="17">
    <disease id="DI-06994">
        <name>Neurodevelopmental disorder with hypotonia, poor growth, dysmorphic facies, and agammaglobulinemia</name>
        <acronym>NEDHGFA</acronym>
        <description>A severe, autosomal recessive disorder with onset in early infancy and characterized by general developmental delay, intellectual disability, absent speech, severe axial hypotonia, short stature, and microcephaly. Patients exhibit agammaglobulinemia with no mature B cells, resulting in recurrent upper and lower respiratory infections and early death.</description>
        <dbReference type="MIM" id="621068"/>
    </disease>
    <text>The disease is caused by variants affecting the gene represented in this entry.</text>
</comment>
<comment type="similarity">
    <text evidence="21">Belongs to the sel-1 family.</text>
</comment>
<comment type="online information" name="Atlas of Genetics and Cytogenetics in Oncology and Haematology">
    <link uri="https://atlasgeneticsoncology.org/gene/42246/SEL1L"/>
</comment>
<reference key="1">
    <citation type="journal article" date="1999" name="J. Hum. Genet.">
        <title>Complete cDNA sequence and genomic organization of a human pancreas-specific gene homologous to Caenorhabditis elegans sel-1.</title>
        <authorList>
            <person name="Harada Y."/>
            <person name="Ozaki K."/>
            <person name="Suzuki M."/>
            <person name="Fujiwara T."/>
            <person name="Takahashi E."/>
            <person name="Nakamura Y."/>
            <person name="Tanigami A."/>
        </authorList>
    </citation>
    <scope>NUCLEOTIDE SEQUENCE [MRNA] (ISOFORM 1)</scope>
    <source>
        <tissue>Pancreas</tissue>
    </source>
</reference>
<reference key="2">
    <citation type="journal article" date="2000" name="Hum. Genet.">
        <title>SEL1L, the human homolog of C. elegans sel-1: refined physical mapping, gene structure and identification of polymorphic markers.</title>
        <authorList>
            <person name="Biunno I."/>
            <person name="Bernard L."/>
            <person name="Dear P."/>
            <person name="Cattaneo M."/>
            <person name="Volorio S."/>
            <person name="Zannini L."/>
            <person name="Bankier A."/>
            <person name="Zollo M."/>
        </authorList>
    </citation>
    <scope>NUCLEOTIDE SEQUENCE [GENOMIC DNA]</scope>
    <source>
        <tissue>Pancreas</tissue>
    </source>
</reference>
<reference key="3">
    <citation type="journal article" date="2003" name="Genome Res.">
        <title>The secreted protein discovery initiative (SPDI), a large-scale effort to identify novel human secreted and transmembrane proteins: a bioinformatics assessment.</title>
        <authorList>
            <person name="Clark H.F."/>
            <person name="Gurney A.L."/>
            <person name="Abaya E."/>
            <person name="Baker K."/>
            <person name="Baldwin D.T."/>
            <person name="Brush J."/>
            <person name="Chen J."/>
            <person name="Chow B."/>
            <person name="Chui C."/>
            <person name="Crowley C."/>
            <person name="Currell B."/>
            <person name="Deuel B."/>
            <person name="Dowd P."/>
            <person name="Eaton D."/>
            <person name="Foster J.S."/>
            <person name="Grimaldi C."/>
            <person name="Gu Q."/>
            <person name="Hass P.E."/>
            <person name="Heldens S."/>
            <person name="Huang A."/>
            <person name="Kim H.S."/>
            <person name="Klimowski L."/>
            <person name="Jin Y."/>
            <person name="Johnson S."/>
            <person name="Lee J."/>
            <person name="Lewis L."/>
            <person name="Liao D."/>
            <person name="Mark M.R."/>
            <person name="Robbie E."/>
            <person name="Sanchez C."/>
            <person name="Schoenfeld J."/>
            <person name="Seshagiri S."/>
            <person name="Simmons L."/>
            <person name="Singh J."/>
            <person name="Smith V."/>
            <person name="Stinson J."/>
            <person name="Vagts A."/>
            <person name="Vandlen R.L."/>
            <person name="Watanabe C."/>
            <person name="Wieand D."/>
            <person name="Woods K."/>
            <person name="Xie M.-H."/>
            <person name="Yansura D.G."/>
            <person name="Yi S."/>
            <person name="Yu G."/>
            <person name="Yuan J."/>
            <person name="Zhang M."/>
            <person name="Zhang Z."/>
            <person name="Goddard A.D."/>
            <person name="Wood W.I."/>
            <person name="Godowski P.J."/>
            <person name="Gray A.M."/>
        </authorList>
    </citation>
    <scope>NUCLEOTIDE SEQUENCE [LARGE SCALE MRNA] (ISOFORM 2)</scope>
</reference>
<reference key="4">
    <citation type="journal article" date="2003" name="Nat. Biotechnol.">
        <title>Identification and quantification of N-linked glycoproteins using hydrazide chemistry, stable isotope labeling and mass spectrometry.</title>
        <authorList>
            <person name="Zhang H."/>
            <person name="Li X.-J."/>
            <person name="Martin D.B."/>
            <person name="Aebersold R."/>
        </authorList>
    </citation>
    <scope>GLYCOSYLATION AT ASN-272</scope>
</reference>
<reference key="5">
    <citation type="journal article" date="2005" name="Proc. Natl. Acad. Sci. U.S.A.">
        <title>Multiprotein complexes that link dislocation, ubiquitination, and extraction of misfolded proteins from the endoplasmic reticulum membrane.</title>
        <authorList>
            <person name="Lilley B.N."/>
            <person name="Ploegh H.L."/>
        </authorList>
    </citation>
    <scope>FUNCTION</scope>
    <scope>INTERACTION WITH SYVN1</scope>
    <scope>IDENTIFICATION IN A COMPLEX WITH SYVN1 AND DERL2</scope>
    <scope>SUBCELLULAR LOCATION</scope>
</reference>
<reference key="6">
    <citation type="journal article" date="2008" name="J. Biol. Chem.">
        <title>Human XTP3-B forms an endoplasmic reticulum quality control scaffold with the HRD1-SEL1L ubiquitin ligase complex and BiP.</title>
        <authorList>
            <person name="Hosokawa N."/>
            <person name="Wada I."/>
            <person name="Nagasawa K."/>
            <person name="Moriyama T."/>
            <person name="Okawa K."/>
            <person name="Nagata K."/>
        </authorList>
    </citation>
    <scope>GLYCOSYLATION</scope>
    <scope>INTERACTION WITH ERLEC1; HSPA5; OS9 AND SYVN1</scope>
</reference>
<reference key="7">
    <citation type="journal article" date="2008" name="Nat. Cell Biol.">
        <title>OS-9 and GRP94 deliver mutant alpha1-antitrypsin to the Hrd1-SEL1L ubiquitin ligase complex for ERAD.</title>
        <authorList>
            <person name="Christianson J.C."/>
            <person name="Shaler T.A."/>
            <person name="Tyler R.E."/>
            <person name="Kopito R.R."/>
        </authorList>
    </citation>
    <scope>INTERACTION WITH ERLEC1; OS9 AND SYVN1</scope>
</reference>
<reference key="8">
    <citation type="journal article" date="2009" name="J. Proteome Res.">
        <title>Glycoproteomics analysis of human liver tissue by combination of multiple enzyme digestion and hydrazide chemistry.</title>
        <authorList>
            <person name="Chen R."/>
            <person name="Jiang X."/>
            <person name="Sun D."/>
            <person name="Han G."/>
            <person name="Wang F."/>
            <person name="Ye M."/>
            <person name="Wang L."/>
            <person name="Zou H."/>
        </authorList>
    </citation>
    <scope>GLYCOSYLATION [LARGE SCALE ANALYSIS] AT ASN-431 AND ASN-608</scope>
    <source>
        <tissue>Liver</tissue>
    </source>
</reference>
<reference key="9">
    <citation type="journal article" date="2009" name="Mol. Cell">
        <title>EDEM1 recognition and delivery of misfolded proteins to the SEL1L-containing ERAD complex.</title>
        <authorList>
            <person name="Cormier J.H."/>
            <person name="Tamura T."/>
            <person name="Sunryd J.C."/>
            <person name="Hebert D.N."/>
        </authorList>
    </citation>
    <scope>INTERACTION WITH EDEM1</scope>
</reference>
<reference key="10">
    <citation type="journal article" date="2009" name="Proc. Natl. Acad. Sci. U.S.A.">
        <title>A luminal flavoprotein in endoplasmic reticulum-associated degradation.</title>
        <authorList>
            <person name="Riemer J."/>
            <person name="Appenzeller-Herzog C."/>
            <person name="Johansson L."/>
            <person name="Bodenmiller B."/>
            <person name="Hartmann-Petersen R."/>
            <person name="Ellgaard L."/>
        </authorList>
    </citation>
    <scope>INTERACTION WITH FOXRED2</scope>
</reference>
<reference key="11">
    <citation type="journal article" date="2011" name="BMC Syst. Biol.">
        <title>Initial characterization of the human central proteome.</title>
        <authorList>
            <person name="Burkard T.R."/>
            <person name="Planyavsky M."/>
            <person name="Kaupe I."/>
            <person name="Breitwieser F.P."/>
            <person name="Buerckstuemmer T."/>
            <person name="Bennett K.L."/>
            <person name="Superti-Furga G."/>
            <person name="Colinge J."/>
        </authorList>
    </citation>
    <scope>IDENTIFICATION BY MASS SPECTROMETRY [LARGE SCALE ANALYSIS]</scope>
</reference>
<reference key="12">
    <citation type="journal article" date="2014" name="Cell Metab.">
        <title>The ER-associated degradation adaptor protein Sel1L regulates LPL secretion and lipid metabolism.</title>
        <authorList>
            <person name="Sha H."/>
            <person name="Sun S."/>
            <person name="Francisco A.B."/>
            <person name="Ehrhardt N."/>
            <person name="Xue Z."/>
            <person name="Liu L."/>
            <person name="Lawrence P."/>
            <person name="Mattijssen F."/>
            <person name="Guber R.D."/>
            <person name="Panhwar M.S."/>
            <person name="Brenna J.T."/>
            <person name="Shi H."/>
            <person name="Xue B."/>
            <person name="Kersten S."/>
            <person name="Bensadoun A."/>
            <person name="Peterfy M."/>
            <person name="Long Q."/>
            <person name="Qi L."/>
        </authorList>
    </citation>
    <scope>INTERACTION WITH LPL</scope>
</reference>
<reference key="13">
    <citation type="journal article" date="2014" name="J. Proteomics">
        <title>An enzyme assisted RP-RPLC approach for in-depth analysis of human liver phosphoproteome.</title>
        <authorList>
            <person name="Bian Y."/>
            <person name="Song C."/>
            <person name="Cheng K."/>
            <person name="Dong M."/>
            <person name="Wang F."/>
            <person name="Huang J."/>
            <person name="Sun D."/>
            <person name="Wang L."/>
            <person name="Ye M."/>
            <person name="Zou H."/>
        </authorList>
    </citation>
    <scope>PHOSPHORYLATION [LARGE SCALE ANALYSIS] AT SER-63</scope>
    <scope>IDENTIFICATION BY MASS SPECTROMETRY [LARGE SCALE ANALYSIS]</scope>
    <source>
        <tissue>Liver</tissue>
    </source>
</reference>
<reference key="14">
    <citation type="journal article" date="2016" name="FEBS J.">
        <title>Association of the SEL1L protein transmembrane domain with HRD1 ubiquitin ligase regulates ERAD-L.</title>
        <authorList>
            <person name="Hosokawa N."/>
            <person name="Wada I."/>
        </authorList>
    </citation>
    <scope>FUNCTION</scope>
    <scope>INTERACTION WITH SYVN1</scope>
</reference>
<reference key="15">
    <citation type="journal article" date="2017" name="J. Cell Sci.">
        <title>Conserved cytoplasmic domains promote Hrd1 ubiquitin ligase complex formation for ER-associated degradation (ERAD).</title>
        <authorList>
            <person name="Schulz J."/>
            <person name="Avci D."/>
            <person name="Queisser M.A."/>
            <person name="Gutschmidt A."/>
            <person name="Dreher L.S."/>
            <person name="Fenech E.J."/>
            <person name="Volkmar N."/>
            <person name="Hayashi Y."/>
            <person name="Hoppe T."/>
            <person name="Christianson J.C."/>
        </authorList>
    </citation>
    <scope>IDENTIFICATION IN THE HRD1 COMPLEX</scope>
</reference>
<reference key="16">
    <citation type="journal article" date="2018" name="J. Virol.">
        <title>Human Cytomegalovirus Tropism Modulator UL148 Interacts with SEL1L, a Cellular Factor That Governs Endoplasmic Reticulum-Associated Degradation of the Viral Envelope Glycoprotein gO.</title>
        <authorList>
            <person name="Nguyen C.C."/>
            <person name="Siddiquey M.N.A."/>
            <person name="Zhang H."/>
            <person name="Li G."/>
            <person name="Kamil J.P."/>
        </authorList>
    </citation>
    <scope>INTERACTION WITH HUMAN CYTOMEGALOVIRUS PROTEIN UL148 (MICROBIAL INFECTION)</scope>
</reference>
<reference key="17">
    <citation type="journal article" date="2024" name="J. Clin. Invest.">
        <title>Hypomorphic variants of SEL1L-HRD1 ER-associated degradation are associated with neurodevelopmental disorders.</title>
        <authorList>
            <person name="Wang H.H."/>
            <person name="Lin L.L."/>
            <person name="Li Z.J."/>
            <person name="Wei X."/>
            <person name="Askander O."/>
            <person name="Cappuccio G."/>
            <person name="Hashem M.O."/>
            <person name="Hubert L."/>
            <person name="Munnich A."/>
            <person name="Alqahtani M."/>
            <person name="Pang Q."/>
            <person name="Burmeister M."/>
            <person name="Lu Y."/>
            <person name="Poirier K."/>
            <person name="Besmond C."/>
            <person name="Sun S."/>
            <person name="Brunetti-Pierri N."/>
            <person name="Alkuraya F.S."/>
            <person name="Qi L."/>
        </authorList>
    </citation>
    <scope>VARIANTS NEDGSAF VARIANT ARG-528 AND ASP-585</scope>
    <scope>CHARACTERIZATION OF VARIANTS NEDGSAF ARG-528 AND ASP-585</scope>
    <scope>INVOLVEMENT IN NEDGSAF</scope>
    <scope>FUNCTION</scope>
    <scope>INTERACTION WITH SYVN1</scope>
</reference>
<reference key="18">
    <citation type="journal article" date="2024" name="J. Clin. Invest.">
        <title>Biallelic Cys141Tyr variant of SEL1L is associated with neurodevelopmental disorders, agammaglobulinemia, and premature death.</title>
        <authorList>
            <person name="Weis D."/>
            <person name="Lin L.L."/>
            <person name="Wang H.H."/>
            <person name="Li Z.J."/>
            <person name="Kusikova K."/>
            <person name="Ciznar P."/>
            <person name="Wolf H.M."/>
            <person name="Leiss-Piller A."/>
            <person name="Wang Z."/>
            <person name="Wei X."/>
            <person name="Weis S."/>
            <person name="Skalicka K."/>
            <person name="Hrckova G."/>
            <person name="Danisovic L."/>
            <person name="Soltysova A."/>
            <person name="Yang T.T."/>
            <person name="Feichtinger R.G."/>
            <person name="Mayr J.A."/>
            <person name="Qi L."/>
        </authorList>
    </citation>
    <scope>VARIANT NEDHGFA TYR-141</scope>
    <scope>CHARACTERIZATION OF VARIANT NEDHGFA TYR-141</scope>
    <scope>INVOLVEMENT IN NEDHGFA</scope>
    <scope>FUNCTION</scope>
    <scope>MUTAGENESIS OF CYS-127</scope>
</reference>
<organism>
    <name type="scientific">Homo sapiens</name>
    <name type="common">Human</name>
    <dbReference type="NCBI Taxonomy" id="9606"/>
    <lineage>
        <taxon>Eukaryota</taxon>
        <taxon>Metazoa</taxon>
        <taxon>Chordata</taxon>
        <taxon>Craniata</taxon>
        <taxon>Vertebrata</taxon>
        <taxon>Euteleostomi</taxon>
        <taxon>Mammalia</taxon>
        <taxon>Eutheria</taxon>
        <taxon>Euarchontoglires</taxon>
        <taxon>Primates</taxon>
        <taxon>Haplorrhini</taxon>
        <taxon>Catarrhini</taxon>
        <taxon>Hominidae</taxon>
        <taxon>Homo</taxon>
    </lineage>
</organism>
<evidence type="ECO:0000250" key="1">
    <source>
        <dbReference type="UniProtKB" id="Q9Z2G6"/>
    </source>
</evidence>
<evidence type="ECO:0000255" key="2"/>
<evidence type="ECO:0000255" key="3">
    <source>
        <dbReference type="PROSITE-ProRule" id="PRU00479"/>
    </source>
</evidence>
<evidence type="ECO:0000256" key="4">
    <source>
        <dbReference type="SAM" id="MobiDB-lite"/>
    </source>
</evidence>
<evidence type="ECO:0000269" key="5">
    <source>
    </source>
</evidence>
<evidence type="ECO:0000269" key="6">
    <source>
    </source>
</evidence>
<evidence type="ECO:0000269" key="7">
    <source>
    </source>
</evidence>
<evidence type="ECO:0000269" key="8">
    <source>
    </source>
</evidence>
<evidence type="ECO:0000269" key="9">
    <source>
    </source>
</evidence>
<evidence type="ECO:0000269" key="10">
    <source>
    </source>
</evidence>
<evidence type="ECO:0000269" key="11">
    <source>
    </source>
</evidence>
<evidence type="ECO:0000269" key="12">
    <source>
    </source>
</evidence>
<evidence type="ECO:0000269" key="13">
    <source>
    </source>
</evidence>
<evidence type="ECO:0000269" key="14">
    <source>
    </source>
</evidence>
<evidence type="ECO:0000269" key="15">
    <source>
    </source>
</evidence>
<evidence type="ECO:0000269" key="16">
    <source>
    </source>
</evidence>
<evidence type="ECO:0000269" key="17">
    <source>
    </source>
</evidence>
<evidence type="ECO:0000303" key="18">
    <source>
    </source>
</evidence>
<evidence type="ECO:0000303" key="19">
    <source>
    </source>
</evidence>
<evidence type="ECO:0000303" key="20">
    <source>
    </source>
</evidence>
<evidence type="ECO:0000305" key="21"/>
<evidence type="ECO:0007744" key="22">
    <source>
    </source>
</evidence>
<name>SE1L1_HUMAN</name>
<sequence length="794" mass="88755">MRVRIGLTLLLCAVLLSLASASSDEEGSQDESLDSKTTLTSDESVKDHTTAGRVVAGQIFLDSEESELESSIQEEEDSLKSQEGESVTEDISFLESPNPENKDYEEPKKVRKPALTAIEGTAHGEPCHFPFLFLDKEYDECTSDGREDGRLWCATTYDYKADEKWGFCETEEEAAKRRQMQEAEMMYQTGMKILNGSNKKSQKREAYRYLQKAASMNHTKALERVSYALLFGDYLPQNIQAAREMFEKLTEEGSPKGQTALGFLYASGLGVNSSQAKALVYYTFGALGGNLIAHMVLGYRYWAGIGVLQSCESALTHYRLVANHVASDISLTGGSVVQRIRLPDEVENPGMNSGMLEEDLIQYYQFLAEKGDVQAQVGLGQLHLHGGRGVEQNHQRAFDYFNLAANAGNSHAMAFLGKMYSEGSDIVPQSNETALHYFKKAADMGNPVGQSGLGMAYLYGRGVQVNYDLALKYFQKAAEQGWVDGQLQLGSMYYNGIGVKRDYKQALKYFNLASQGGHILAFYNLAQMHASGTGVMRSCHTAVELFKNVCERGRWSERLMTAYNSYKDGDYNAAVIQYLLLAEQGYEVAQSNAAFILDQREASIVGENETYPRALLHWNRAASQGYTVARIKLGDYHFYGFGTDVDYETAFIHYRLASEQQHSAQAMFNLGYMHEKGLGIKQDIHLAKRFYDMAAEASPDAQVPVFLALCKLGVVYFLQYIRETNIRDMFTQLDMDQLLGPEWDLYLMTIIALLLGTVIAYRQRQHQDMPAPRPPGPRPAPPQQEGPPEQQPPQ</sequence>
<gene>
    <name evidence="19" type="primary">SEL1L</name>
    <name evidence="18" type="synonym">TSA305</name>
    <name evidence="20" type="ORF">UNQ128/PRO1063</name>
</gene>
<dbReference type="EMBL" id="AB024763">
    <property type="protein sequence ID" value="BAA89204.1"/>
    <property type="molecule type" value="Genomic_DNA"/>
</dbReference>
<dbReference type="EMBL" id="AB020335">
    <property type="protein sequence ID" value="BAA87904.1"/>
    <property type="molecule type" value="mRNA"/>
</dbReference>
<dbReference type="EMBL" id="AF052059">
    <property type="protein sequence ID" value="AAF29413.1"/>
    <property type="molecule type" value="mRNA"/>
</dbReference>
<dbReference type="EMBL" id="AF157516">
    <property type="protein sequence ID" value="AAF24176.1"/>
    <property type="molecule type" value="Genomic_DNA"/>
</dbReference>
<dbReference type="EMBL" id="AF198647">
    <property type="protein sequence ID" value="AAL40905.1"/>
    <property type="molecule type" value="Genomic_DNA"/>
</dbReference>
<dbReference type="EMBL" id="AF198631">
    <property type="protein sequence ID" value="AAL40905.1"/>
    <property type="status" value="JOINED"/>
    <property type="molecule type" value="Genomic_DNA"/>
</dbReference>
<dbReference type="EMBL" id="AF198632">
    <property type="protein sequence ID" value="AAL40905.1"/>
    <property type="status" value="JOINED"/>
    <property type="molecule type" value="Genomic_DNA"/>
</dbReference>
<dbReference type="EMBL" id="AF198633">
    <property type="protein sequence ID" value="AAL40905.1"/>
    <property type="status" value="JOINED"/>
    <property type="molecule type" value="Genomic_DNA"/>
</dbReference>
<dbReference type="EMBL" id="AF198634">
    <property type="protein sequence ID" value="AAL40905.1"/>
    <property type="status" value="JOINED"/>
    <property type="molecule type" value="Genomic_DNA"/>
</dbReference>
<dbReference type="EMBL" id="AF198635">
    <property type="protein sequence ID" value="AAL40905.1"/>
    <property type="status" value="JOINED"/>
    <property type="molecule type" value="Genomic_DNA"/>
</dbReference>
<dbReference type="EMBL" id="AF198636">
    <property type="protein sequence ID" value="AAL40905.1"/>
    <property type="status" value="JOINED"/>
    <property type="molecule type" value="Genomic_DNA"/>
</dbReference>
<dbReference type="EMBL" id="AF198637">
    <property type="protein sequence ID" value="AAL40905.1"/>
    <property type="status" value="JOINED"/>
    <property type="molecule type" value="Genomic_DNA"/>
</dbReference>
<dbReference type="EMBL" id="AF198638">
    <property type="protein sequence ID" value="AAL40905.1"/>
    <property type="status" value="JOINED"/>
    <property type="molecule type" value="Genomic_DNA"/>
</dbReference>
<dbReference type="EMBL" id="AF198639">
    <property type="protein sequence ID" value="AAL40905.1"/>
    <property type="status" value="JOINED"/>
    <property type="molecule type" value="Genomic_DNA"/>
</dbReference>
<dbReference type="EMBL" id="AF198640">
    <property type="protein sequence ID" value="AAL40905.1"/>
    <property type="status" value="JOINED"/>
    <property type="molecule type" value="Genomic_DNA"/>
</dbReference>
<dbReference type="EMBL" id="AF198641">
    <property type="protein sequence ID" value="AAL40905.1"/>
    <property type="status" value="JOINED"/>
    <property type="molecule type" value="Genomic_DNA"/>
</dbReference>
<dbReference type="EMBL" id="AF198642">
    <property type="protein sequence ID" value="AAL40905.1"/>
    <property type="status" value="JOINED"/>
    <property type="molecule type" value="Genomic_DNA"/>
</dbReference>
<dbReference type="EMBL" id="AF198643">
    <property type="protein sequence ID" value="AAL40905.1"/>
    <property type="status" value="JOINED"/>
    <property type="molecule type" value="Genomic_DNA"/>
</dbReference>
<dbReference type="EMBL" id="AF198644">
    <property type="protein sequence ID" value="AAL40905.1"/>
    <property type="status" value="JOINED"/>
    <property type="molecule type" value="Genomic_DNA"/>
</dbReference>
<dbReference type="EMBL" id="AF198645">
    <property type="protein sequence ID" value="AAL40905.1"/>
    <property type="status" value="JOINED"/>
    <property type="molecule type" value="Genomic_DNA"/>
</dbReference>
<dbReference type="EMBL" id="AF198646">
    <property type="protein sequence ID" value="AAL40905.1"/>
    <property type="status" value="JOINED"/>
    <property type="molecule type" value="Genomic_DNA"/>
</dbReference>
<dbReference type="EMBL" id="AY358651">
    <property type="protein sequence ID" value="AAQ89014.1"/>
    <property type="molecule type" value="mRNA"/>
</dbReference>
<dbReference type="CCDS" id="CCDS58333.1">
    <molecule id="Q9UBV2-2"/>
</dbReference>
<dbReference type="CCDS" id="CCDS9876.1">
    <molecule id="Q9UBV2-1"/>
</dbReference>
<dbReference type="RefSeq" id="NP_001231913.1">
    <molecule id="Q9UBV2-2"/>
    <property type="nucleotide sequence ID" value="NM_001244984.2"/>
</dbReference>
<dbReference type="RefSeq" id="NP_005056.3">
    <molecule id="Q9UBV2-1"/>
    <property type="nucleotide sequence ID" value="NM_005065.5"/>
</dbReference>
<dbReference type="PDB" id="8KES">
    <property type="method" value="EM"/>
    <property type="resolution" value="3.50 A"/>
    <property type="chains" value="C/D=1-794"/>
</dbReference>
<dbReference type="PDB" id="8KET">
    <property type="method" value="EM"/>
    <property type="resolution" value="3.30 A"/>
    <property type="chains" value="C=177-723"/>
</dbReference>
<dbReference type="PDB" id="8KEV">
    <property type="method" value="EM"/>
    <property type="resolution" value="3.50 A"/>
    <property type="chains" value="C/D=1-794"/>
</dbReference>
<dbReference type="PDBsum" id="8KES"/>
<dbReference type="PDBsum" id="8KET"/>
<dbReference type="PDBsum" id="8KEV"/>
<dbReference type="EMDB" id="EMD-37166"/>
<dbReference type="EMDB" id="EMD-37167"/>
<dbReference type="EMDB" id="EMD-37168"/>
<dbReference type="SMR" id="Q9UBV2"/>
<dbReference type="BioGRID" id="112300">
    <property type="interactions" value="260"/>
</dbReference>
<dbReference type="CORUM" id="Q9UBV2"/>
<dbReference type="DIP" id="DIP-46259N"/>
<dbReference type="FunCoup" id="Q9UBV2">
    <property type="interactions" value="1741"/>
</dbReference>
<dbReference type="IntAct" id="Q9UBV2">
    <property type="interactions" value="87"/>
</dbReference>
<dbReference type="MINT" id="Q9UBV2"/>
<dbReference type="STRING" id="9606.ENSP00000337053"/>
<dbReference type="TCDB" id="3.A.16.1.4">
    <property type="family name" value="the endoplasmic reticular retrotranslocon (er-rt) family"/>
</dbReference>
<dbReference type="GlyConnect" id="1669">
    <property type="glycosylation" value="12 N-Linked glycans (5 sites)"/>
</dbReference>
<dbReference type="GlyCosmos" id="Q9UBV2">
    <property type="glycosylation" value="6 sites, 11 glycans"/>
</dbReference>
<dbReference type="GlyGen" id="Q9UBV2">
    <property type="glycosylation" value="15 sites, 44 N-linked glycans (5 sites), 2 O-linked glycans (9 sites)"/>
</dbReference>
<dbReference type="iPTMnet" id="Q9UBV2"/>
<dbReference type="PhosphoSitePlus" id="Q9UBV2"/>
<dbReference type="SwissPalm" id="Q9UBV2"/>
<dbReference type="BioMuta" id="SEL1L"/>
<dbReference type="DMDM" id="62512184"/>
<dbReference type="jPOST" id="Q9UBV2"/>
<dbReference type="MassIVE" id="Q9UBV2"/>
<dbReference type="PaxDb" id="9606-ENSP00000337053"/>
<dbReference type="PeptideAtlas" id="Q9UBV2"/>
<dbReference type="ProteomicsDB" id="84077">
    <molecule id="Q9UBV2-1"/>
</dbReference>
<dbReference type="ProteomicsDB" id="84078">
    <molecule id="Q9UBV2-2"/>
</dbReference>
<dbReference type="Pumba" id="Q9UBV2"/>
<dbReference type="Antibodypedia" id="13274">
    <property type="antibodies" value="263 antibodies from 30 providers"/>
</dbReference>
<dbReference type="DNASU" id="6400"/>
<dbReference type="Ensembl" id="ENST00000336735.9">
    <molecule id="Q9UBV2-1"/>
    <property type="protein sequence ID" value="ENSP00000337053.4"/>
    <property type="gene ID" value="ENSG00000071537.14"/>
</dbReference>
<dbReference type="Ensembl" id="ENST00000555824.5">
    <molecule id="Q9UBV2-2"/>
    <property type="protein sequence ID" value="ENSP00000450709.1"/>
    <property type="gene ID" value="ENSG00000071537.14"/>
</dbReference>
<dbReference type="GeneID" id="6400"/>
<dbReference type="KEGG" id="hsa:6400"/>
<dbReference type="MANE-Select" id="ENST00000336735.9">
    <property type="protein sequence ID" value="ENSP00000337053.4"/>
    <property type="RefSeq nucleotide sequence ID" value="NM_005065.6"/>
    <property type="RefSeq protein sequence ID" value="NP_005056.3"/>
</dbReference>
<dbReference type="UCSC" id="uc001xvo.5">
    <molecule id="Q9UBV2-1"/>
    <property type="organism name" value="human"/>
</dbReference>
<dbReference type="AGR" id="HGNC:10717"/>
<dbReference type="CTD" id="6400"/>
<dbReference type="DisGeNET" id="6400"/>
<dbReference type="GeneCards" id="SEL1L"/>
<dbReference type="HGNC" id="HGNC:10717">
    <property type="gene designation" value="SEL1L"/>
</dbReference>
<dbReference type="HPA" id="ENSG00000071537">
    <property type="expression patterns" value="Tissue enriched (pancreas)"/>
</dbReference>
<dbReference type="MIM" id="602329">
    <property type="type" value="gene"/>
</dbReference>
<dbReference type="MIM" id="621067">
    <property type="type" value="phenotype"/>
</dbReference>
<dbReference type="MIM" id="621068">
    <property type="type" value="phenotype"/>
</dbReference>
<dbReference type="neXtProt" id="NX_Q9UBV2"/>
<dbReference type="OpenTargets" id="ENSG00000071537"/>
<dbReference type="PharmGKB" id="PA35639"/>
<dbReference type="VEuPathDB" id="HostDB:ENSG00000071537"/>
<dbReference type="eggNOG" id="KOG1550">
    <property type="taxonomic scope" value="Eukaryota"/>
</dbReference>
<dbReference type="GeneTree" id="ENSGT00940000156671"/>
<dbReference type="HOGENOM" id="CLU_007931_2_1_1"/>
<dbReference type="InParanoid" id="Q9UBV2"/>
<dbReference type="OMA" id="LLGHWMD"/>
<dbReference type="OrthoDB" id="27934at2759"/>
<dbReference type="PAN-GO" id="Q9UBV2">
    <property type="GO annotations" value="2 GO annotations based on evolutionary models"/>
</dbReference>
<dbReference type="PhylomeDB" id="Q9UBV2"/>
<dbReference type="TreeFam" id="TF315257"/>
<dbReference type="PathwayCommons" id="Q9UBV2"/>
<dbReference type="Reactome" id="R-HSA-1912420">
    <property type="pathway name" value="Pre-NOTCH Processing in Golgi"/>
</dbReference>
<dbReference type="Reactome" id="R-HSA-382556">
    <property type="pathway name" value="ABC-family proteins mediated transport"/>
</dbReference>
<dbReference type="Reactome" id="R-HSA-5358346">
    <property type="pathway name" value="Hedgehog ligand biogenesis"/>
</dbReference>
<dbReference type="Reactome" id="R-HSA-5362768">
    <property type="pathway name" value="Hh mutants are degraded by ERAD"/>
</dbReference>
<dbReference type="Reactome" id="R-HSA-5678895">
    <property type="pathway name" value="Defective CFTR causes cystic fibrosis"/>
</dbReference>
<dbReference type="Reactome" id="R-HSA-901032">
    <property type="pathway name" value="ER Quality Control Compartment (ERQC)"/>
</dbReference>
<dbReference type="SignaLink" id="Q9UBV2"/>
<dbReference type="BioGRID-ORCS" id="6400">
    <property type="hits" value="90 hits in 1160 CRISPR screens"/>
</dbReference>
<dbReference type="ChiTaRS" id="SEL1L">
    <property type="organism name" value="human"/>
</dbReference>
<dbReference type="GeneWiki" id="SEL1L"/>
<dbReference type="GenomeRNAi" id="6400"/>
<dbReference type="Pharos" id="Q9UBV2">
    <property type="development level" value="Tbio"/>
</dbReference>
<dbReference type="PRO" id="PR:Q9UBV2"/>
<dbReference type="Proteomes" id="UP000005640">
    <property type="component" value="Chromosome 14"/>
</dbReference>
<dbReference type="RNAct" id="Q9UBV2">
    <property type="molecule type" value="protein"/>
</dbReference>
<dbReference type="Bgee" id="ENSG00000071537">
    <property type="expression patterns" value="Expressed in body of pancreas and 213 other cell types or tissues"/>
</dbReference>
<dbReference type="ExpressionAtlas" id="Q9UBV2">
    <property type="expression patterns" value="baseline and differential"/>
</dbReference>
<dbReference type="GO" id="GO:0036513">
    <property type="term" value="C:Derlin-1 retrotranslocation complex"/>
    <property type="evidence" value="ECO:0000314"/>
    <property type="project" value="ParkinsonsUK-UCL"/>
</dbReference>
<dbReference type="GO" id="GO:0005783">
    <property type="term" value="C:endoplasmic reticulum"/>
    <property type="evidence" value="ECO:0000314"/>
    <property type="project" value="UniProtKB"/>
</dbReference>
<dbReference type="GO" id="GO:0005789">
    <property type="term" value="C:endoplasmic reticulum membrane"/>
    <property type="evidence" value="ECO:0000318"/>
    <property type="project" value="GO_Central"/>
</dbReference>
<dbReference type="GO" id="GO:0000836">
    <property type="term" value="C:Hrd1p ubiquitin ligase complex"/>
    <property type="evidence" value="ECO:0000314"/>
    <property type="project" value="UniProtKB"/>
</dbReference>
<dbReference type="GO" id="GO:0000839">
    <property type="term" value="C:Hrd1p ubiquitin ligase ERAD-L complex"/>
    <property type="evidence" value="ECO:0000315"/>
    <property type="project" value="UniProtKB"/>
</dbReference>
<dbReference type="GO" id="GO:0036503">
    <property type="term" value="P:ERAD pathway"/>
    <property type="evidence" value="ECO:0000315"/>
    <property type="project" value="UniProtKB"/>
</dbReference>
<dbReference type="GO" id="GO:0007219">
    <property type="term" value="P:Notch signaling pathway"/>
    <property type="evidence" value="ECO:0007669"/>
    <property type="project" value="UniProtKB-KW"/>
</dbReference>
<dbReference type="GO" id="GO:0009306">
    <property type="term" value="P:protein secretion"/>
    <property type="evidence" value="ECO:0000250"/>
    <property type="project" value="UniProtKB"/>
</dbReference>
<dbReference type="GO" id="GO:0050821">
    <property type="term" value="P:protein stabilization"/>
    <property type="evidence" value="ECO:0000304"/>
    <property type="project" value="ParkinsonsUK-UCL"/>
</dbReference>
<dbReference type="GO" id="GO:0030970">
    <property type="term" value="P:retrograde protein transport, ER to cytosol"/>
    <property type="evidence" value="ECO:0000315"/>
    <property type="project" value="ParkinsonsUK-UCL"/>
</dbReference>
<dbReference type="GO" id="GO:0006641">
    <property type="term" value="P:triglyceride metabolic process"/>
    <property type="evidence" value="ECO:0000250"/>
    <property type="project" value="UniProtKB"/>
</dbReference>
<dbReference type="CDD" id="cd00062">
    <property type="entry name" value="FN2"/>
    <property type="match status" value="1"/>
</dbReference>
<dbReference type="FunFam" id="2.10.10.10:FF:000001">
    <property type="entry name" value="Fibronectin 1a isoform 1"/>
    <property type="match status" value="1"/>
</dbReference>
<dbReference type="FunFam" id="1.25.40.10:FF:000208">
    <property type="entry name" value="Protein sel-1 homolog 1"/>
    <property type="match status" value="1"/>
</dbReference>
<dbReference type="FunFam" id="1.25.40.10:FF:000193">
    <property type="entry name" value="protein sel-1 homolog 1 isoform X1"/>
    <property type="match status" value="1"/>
</dbReference>
<dbReference type="FunFam" id="1.25.40.10:FF:000200">
    <property type="entry name" value="protein sel-1 homolog 1 precursor"/>
    <property type="match status" value="1"/>
</dbReference>
<dbReference type="Gene3D" id="2.10.10.10">
    <property type="entry name" value="Fibronectin, type II, collagen-binding"/>
    <property type="match status" value="1"/>
</dbReference>
<dbReference type="Gene3D" id="1.25.40.10">
    <property type="entry name" value="Tetratricopeptide repeat domain"/>
    <property type="match status" value="3"/>
</dbReference>
<dbReference type="InterPro" id="IPR000562">
    <property type="entry name" value="FN_type2_dom"/>
</dbReference>
<dbReference type="InterPro" id="IPR036943">
    <property type="entry name" value="FN_type2_sf"/>
</dbReference>
<dbReference type="InterPro" id="IPR013806">
    <property type="entry name" value="Kringle-like"/>
</dbReference>
<dbReference type="InterPro" id="IPR006597">
    <property type="entry name" value="Sel1-like"/>
</dbReference>
<dbReference type="InterPro" id="IPR050767">
    <property type="entry name" value="Sel1_AlgK"/>
</dbReference>
<dbReference type="InterPro" id="IPR011990">
    <property type="entry name" value="TPR-like_helical_dom_sf"/>
</dbReference>
<dbReference type="PANTHER" id="PTHR11102:SF70">
    <property type="entry name" value="PROTEIN SEL-1 HOMOLOG 1"/>
    <property type="match status" value="1"/>
</dbReference>
<dbReference type="PANTHER" id="PTHR11102">
    <property type="entry name" value="SEL-1-LIKE PROTEIN"/>
    <property type="match status" value="1"/>
</dbReference>
<dbReference type="Pfam" id="PF00040">
    <property type="entry name" value="fn2"/>
    <property type="match status" value="1"/>
</dbReference>
<dbReference type="Pfam" id="PF08238">
    <property type="entry name" value="Sel1"/>
    <property type="match status" value="11"/>
</dbReference>
<dbReference type="PRINTS" id="PR00013">
    <property type="entry name" value="FNTYPEII"/>
</dbReference>
<dbReference type="SMART" id="SM00059">
    <property type="entry name" value="FN2"/>
    <property type="match status" value="1"/>
</dbReference>
<dbReference type="SMART" id="SM00671">
    <property type="entry name" value="SEL1"/>
    <property type="match status" value="11"/>
</dbReference>
<dbReference type="SUPFAM" id="SSF81901">
    <property type="entry name" value="HCP-like"/>
    <property type="match status" value="3"/>
</dbReference>
<dbReference type="SUPFAM" id="SSF57440">
    <property type="entry name" value="Kringle-like"/>
    <property type="match status" value="1"/>
</dbReference>
<dbReference type="PROSITE" id="PS00023">
    <property type="entry name" value="FN2_1"/>
    <property type="match status" value="1"/>
</dbReference>
<dbReference type="PROSITE" id="PS51092">
    <property type="entry name" value="FN2_2"/>
    <property type="match status" value="1"/>
</dbReference>
<accession>Q9UBV2</accession>
<accession>Q6UWT6</accession>
<accession>Q9P1T9</accession>
<accession>Q9UHK7</accession>
<feature type="signal peptide" evidence="2">
    <location>
        <begin position="1"/>
        <end position="21"/>
    </location>
</feature>
<feature type="chain" id="PRO_0000022294" description="Protein sel-1 homolog 1">
    <location>
        <begin position="22"/>
        <end position="794"/>
    </location>
</feature>
<feature type="topological domain" description="Lumenal" evidence="2">
    <location>
        <begin position="22"/>
        <end position="738"/>
    </location>
</feature>
<feature type="transmembrane region" description="Helical" evidence="2">
    <location>
        <begin position="739"/>
        <end position="759"/>
    </location>
</feature>
<feature type="topological domain" description="Cytoplasmic" evidence="2">
    <location>
        <begin position="760"/>
        <end position="794"/>
    </location>
</feature>
<feature type="domain" description="Fibronectin type-II" evidence="3">
    <location>
        <begin position="122"/>
        <end position="170"/>
    </location>
</feature>
<feature type="repeat" description="Sel1-like 1">
    <location>
        <begin position="183"/>
        <end position="218"/>
    </location>
</feature>
<feature type="repeat" description="Sel1-like 2">
    <location>
        <begin position="219"/>
        <end position="254"/>
    </location>
</feature>
<feature type="repeat" description="Sel1-like 3">
    <location>
        <begin position="255"/>
        <end position="290"/>
    </location>
</feature>
<feature type="repeat" description="Sel1-like 4">
    <location>
        <begin position="291"/>
        <end position="326"/>
    </location>
</feature>
<feature type="repeat" description="Sel1-like 5">
    <location>
        <begin position="373"/>
        <end position="409"/>
    </location>
</feature>
<feature type="repeat" description="Sel1-like 6">
    <location>
        <begin position="410"/>
        <end position="446"/>
    </location>
</feature>
<feature type="repeat" description="Sel1-like 7">
    <location>
        <begin position="447"/>
        <end position="482"/>
    </location>
</feature>
<feature type="repeat" description="Sel1-like 8">
    <location>
        <begin position="483"/>
        <end position="518"/>
    </location>
</feature>
<feature type="repeat" description="Sel1-like 9">
    <location>
        <begin position="519"/>
        <end position="554"/>
    </location>
</feature>
<feature type="repeat" description="Sel1-like 10">
    <location>
        <begin position="627"/>
        <end position="662"/>
    </location>
</feature>
<feature type="repeat" description="Sel1-like 11">
    <location>
        <begin position="664"/>
        <end position="699"/>
    </location>
</feature>
<feature type="region of interest" description="Disordered" evidence="4">
    <location>
        <begin position="21"/>
        <end position="50"/>
    </location>
</feature>
<feature type="region of interest" description="Interaction with ERLEC1, OS9 and SYVN1">
    <location>
        <begin position="22"/>
        <end position="737"/>
    </location>
</feature>
<feature type="region of interest" description="Disordered" evidence="4">
    <location>
        <begin position="64"/>
        <end position="109"/>
    </location>
</feature>
<feature type="region of interest" description="Important for homodimerization and oligomerization" evidence="1">
    <location>
        <begin position="352"/>
        <end position="537"/>
    </location>
</feature>
<feature type="region of interest" description="Interaction with SYVN1" evidence="1">
    <location>
        <begin position="643"/>
        <end position="723"/>
    </location>
</feature>
<feature type="region of interest" description="Mediates retention in the endoplasmic reticulum">
    <location>
        <begin position="738"/>
        <end position="794"/>
    </location>
</feature>
<feature type="region of interest" description="Disordered" evidence="4">
    <location>
        <begin position="766"/>
        <end position="794"/>
    </location>
</feature>
<feature type="compositionally biased region" description="Acidic residues" evidence="4">
    <location>
        <begin position="23"/>
        <end position="32"/>
    </location>
</feature>
<feature type="compositionally biased region" description="Acidic residues" evidence="4">
    <location>
        <begin position="64"/>
        <end position="77"/>
    </location>
</feature>
<feature type="compositionally biased region" description="Pro residues" evidence="4">
    <location>
        <begin position="771"/>
        <end position="794"/>
    </location>
</feature>
<feature type="modified residue" description="Phosphoserine" evidence="22">
    <location>
        <position position="63"/>
    </location>
</feature>
<feature type="glycosylation site" description="N-linked (GlcNAc...) asparagine" evidence="2">
    <location>
        <position position="195"/>
    </location>
</feature>
<feature type="glycosylation site" description="N-linked (GlcNAc...) asparagine" evidence="2">
    <location>
        <position position="217"/>
    </location>
</feature>
<feature type="glycosylation site" description="N-linked (GlcNAc...) asparagine" evidence="5">
    <location>
        <position position="272"/>
    </location>
</feature>
<feature type="glycosylation site" description="N-linked (GlcNAc...) asparagine" evidence="9">
    <location>
        <position position="431"/>
    </location>
</feature>
<feature type="glycosylation site" description="N-linked (GlcNAc...) asparagine" evidence="9">
    <location>
        <position position="608"/>
    </location>
</feature>
<feature type="disulfide bond" evidence="3">
    <location>
        <begin position="127"/>
        <end position="153"/>
    </location>
</feature>
<feature type="disulfide bond" evidence="3">
    <location>
        <begin position="141"/>
        <end position="168"/>
    </location>
</feature>
<feature type="splice variant" id="VSP_013322" description="In isoform 2." evidence="20">
    <original>GYRY</original>
    <variation>VSRL</variation>
    <location>
        <begin position="298"/>
        <end position="301"/>
    </location>
</feature>
<feature type="splice variant" id="VSP_013323" description="In isoform 2." evidence="20">
    <location>
        <begin position="302"/>
        <end position="794"/>
    </location>
</feature>
<feature type="sequence variant" id="VAR_090405" description="In NEDHGFA; likely pathogenic; decreased SEL1L protein abundance due to increased degradation; results in proteasome-mediated self-destruction of ERAD complex components; impaired function in ERAD pathway and decreased degradation of ERAD substrates." evidence="17">
    <original>C</original>
    <variation>Y</variation>
    <location>
        <position position="141"/>
    </location>
</feature>
<feature type="sequence variant" id="VAR_029303" description="In dbSNP:rs11499034.">
    <original>D</original>
    <variation>G</variation>
    <location>
        <position position="162"/>
    </location>
</feature>
<feature type="sequence variant" id="VAR_090406" description="In NEDGSAF; likely pathogenic; results in impaired function in ERAD pathway and decreased degradation of endogenous and model ERAD substrates; decreased SEL1L and SYVN1 protein abundance." evidence="16">
    <original>M</original>
    <variation>R</variation>
    <location>
        <position position="528"/>
    </location>
</feature>
<feature type="sequence variant" id="VAR_090407" description="In NEDGSAF; uncertain significance; results in impaired function in ERAD pathway and decreased degradation of endogenous and model ERAD substrates; decreased interaction with ERLEC1; decreased interaction with OS9; decreased interaction with SYVN1." evidence="16">
    <original>G</original>
    <variation>D</variation>
    <location>
        <position position="585"/>
    </location>
</feature>
<feature type="sequence variant" id="VAR_053963" description="In dbSNP:rs1051193.">
    <original>V</original>
    <variation>I</variation>
    <location>
        <position position="714"/>
    </location>
</feature>
<feature type="mutagenesis site" description="Results in proteasome-mediated self-destruction of ERAD complex components and impaired degradation of ERAD substrates." evidence="17">
    <original>C</original>
    <variation>Y</variation>
    <location>
        <position position="127"/>
    </location>
</feature>
<feature type="sequence conflict" description="In Ref. 2; AAF29413/AAL40905." evidence="21" ref="2">
    <original>M</original>
    <variation>V</variation>
    <location>
        <position position="186"/>
    </location>
</feature>
<protein>
    <recommendedName>
        <fullName>Protein sel-1 homolog 1</fullName>
    </recommendedName>
    <alternativeName>
        <fullName evidence="19">Suppressor of lin-12-like protein 1</fullName>
        <shortName>Sel-1L</shortName>
    </alternativeName>
</protein>